<keyword id="KW-0378">Hydrolase</keyword>
<keyword id="KW-0460">Magnesium</keyword>
<keyword id="KW-0479">Metal-binding</keyword>
<keyword id="KW-0546">Nucleotide metabolism</keyword>
<comment type="function">
    <text evidence="1">This enzyme is involved in nucleotide metabolism: it produces dUMP, the immediate precursor of thymidine nucleotides and it decreases the intracellular concentration of dUTP so that uracil cannot be incorporated into DNA.</text>
</comment>
<comment type="catalytic activity">
    <reaction evidence="1">
        <text>dUTP + H2O = dUMP + diphosphate + H(+)</text>
        <dbReference type="Rhea" id="RHEA:10248"/>
        <dbReference type="ChEBI" id="CHEBI:15377"/>
        <dbReference type="ChEBI" id="CHEBI:15378"/>
        <dbReference type="ChEBI" id="CHEBI:33019"/>
        <dbReference type="ChEBI" id="CHEBI:61555"/>
        <dbReference type="ChEBI" id="CHEBI:246422"/>
        <dbReference type="EC" id="3.6.1.23"/>
    </reaction>
</comment>
<comment type="cofactor">
    <cofactor evidence="1">
        <name>Mg(2+)</name>
        <dbReference type="ChEBI" id="CHEBI:18420"/>
    </cofactor>
</comment>
<comment type="pathway">
    <text evidence="1">Pyrimidine metabolism; dUMP biosynthesis; dUMP from dCTP (dUTP route): step 2/2.</text>
</comment>
<comment type="similarity">
    <text evidence="1">Belongs to the dUTPase family.</text>
</comment>
<reference key="1">
    <citation type="submission" date="2006-12" db="EMBL/GenBank/DDBJ databases">
        <authorList>
            <person name="Hendrix L."/>
            <person name="Mohamoud Y."/>
            <person name="Radune D."/>
            <person name="Shvartsbeyn A."/>
            <person name="Daugherty S."/>
            <person name="Dodson R."/>
            <person name="Durkin A.S."/>
            <person name="Harkins D."/>
            <person name="Huot H."/>
            <person name="Kothari S.P."/>
            <person name="Madupu R."/>
            <person name="Li J."/>
            <person name="Nelson W.C."/>
            <person name="Shrivastava S."/>
            <person name="Giglio M.G."/>
            <person name="Haft D."/>
            <person name="Selengut J."/>
            <person name="Fraser-Ligget C."/>
            <person name="Seshadri R."/>
        </authorList>
    </citation>
    <scope>NUCLEOTIDE SEQUENCE [LARGE SCALE GENOMIC DNA]</scope>
    <source>
        <strain>ATCC 35685 / KC583 / Herrer 020/F12,63</strain>
    </source>
</reference>
<organism>
    <name type="scientific">Bartonella bacilliformis (strain ATCC 35685 / KC583 / Herrer 020/F12,63)</name>
    <dbReference type="NCBI Taxonomy" id="360095"/>
    <lineage>
        <taxon>Bacteria</taxon>
        <taxon>Pseudomonadati</taxon>
        <taxon>Pseudomonadota</taxon>
        <taxon>Alphaproteobacteria</taxon>
        <taxon>Hyphomicrobiales</taxon>
        <taxon>Bartonellaceae</taxon>
        <taxon>Bartonella</taxon>
    </lineage>
</organism>
<accession>A1URB3</accession>
<proteinExistence type="inferred from homology"/>
<name>DUT_BARBK</name>
<protein>
    <recommendedName>
        <fullName evidence="1">Deoxyuridine 5'-triphosphate nucleotidohydrolase</fullName>
        <shortName evidence="1">dUTPase</shortName>
        <ecNumber evidence="1">3.6.1.23</ecNumber>
    </recommendedName>
    <alternativeName>
        <fullName evidence="1">dUTP pyrophosphatase</fullName>
    </alternativeName>
</protein>
<evidence type="ECO:0000255" key="1">
    <source>
        <dbReference type="HAMAP-Rule" id="MF_00116"/>
    </source>
</evidence>
<evidence type="ECO:0000256" key="2">
    <source>
        <dbReference type="SAM" id="MobiDB-lite"/>
    </source>
</evidence>
<feature type="chain" id="PRO_1000015445" description="Deoxyuridine 5'-triphosphate nucleotidohydrolase">
    <location>
        <begin position="1"/>
        <end position="177"/>
    </location>
</feature>
<feature type="region of interest" description="Disordered" evidence="2">
    <location>
        <begin position="150"/>
        <end position="177"/>
    </location>
</feature>
<feature type="compositionally biased region" description="Polar residues" evidence="2">
    <location>
        <begin position="150"/>
        <end position="163"/>
    </location>
</feature>
<feature type="compositionally biased region" description="Gly residues" evidence="2">
    <location>
        <begin position="166"/>
        <end position="177"/>
    </location>
</feature>
<feature type="binding site" evidence="1">
    <location>
        <begin position="83"/>
        <end position="85"/>
    </location>
    <ligand>
        <name>substrate</name>
    </ligand>
</feature>
<feature type="binding site" evidence="1">
    <location>
        <position position="96"/>
    </location>
    <ligand>
        <name>substrate</name>
    </ligand>
</feature>
<feature type="binding site" evidence="1">
    <location>
        <begin position="100"/>
        <end position="102"/>
    </location>
    <ligand>
        <name>substrate</name>
    </ligand>
</feature>
<feature type="binding site" evidence="1">
    <location>
        <position position="110"/>
    </location>
    <ligand>
        <name>substrate</name>
    </ligand>
</feature>
<gene>
    <name evidence="1" type="primary">dut</name>
    <name type="ordered locus">BARBAKC583_0178</name>
</gene>
<dbReference type="EC" id="3.6.1.23" evidence="1"/>
<dbReference type="EMBL" id="CP000524">
    <property type="protein sequence ID" value="ABM45604.1"/>
    <property type="molecule type" value="Genomic_DNA"/>
</dbReference>
<dbReference type="SMR" id="A1URB3"/>
<dbReference type="STRING" id="360095.BARBAKC583_0178"/>
<dbReference type="KEGG" id="bbk:BARBAKC583_0178"/>
<dbReference type="eggNOG" id="COG0756">
    <property type="taxonomic scope" value="Bacteria"/>
</dbReference>
<dbReference type="HOGENOM" id="CLU_068508_1_0_5"/>
<dbReference type="UniPathway" id="UPA00610">
    <property type="reaction ID" value="UER00666"/>
</dbReference>
<dbReference type="Proteomes" id="UP000000643">
    <property type="component" value="Chromosome"/>
</dbReference>
<dbReference type="GO" id="GO:0004170">
    <property type="term" value="F:dUTP diphosphatase activity"/>
    <property type="evidence" value="ECO:0007669"/>
    <property type="project" value="UniProtKB-UniRule"/>
</dbReference>
<dbReference type="GO" id="GO:0000287">
    <property type="term" value="F:magnesium ion binding"/>
    <property type="evidence" value="ECO:0007669"/>
    <property type="project" value="UniProtKB-UniRule"/>
</dbReference>
<dbReference type="GO" id="GO:0006226">
    <property type="term" value="P:dUMP biosynthetic process"/>
    <property type="evidence" value="ECO:0007669"/>
    <property type="project" value="UniProtKB-UniRule"/>
</dbReference>
<dbReference type="GO" id="GO:0046081">
    <property type="term" value="P:dUTP catabolic process"/>
    <property type="evidence" value="ECO:0007669"/>
    <property type="project" value="InterPro"/>
</dbReference>
<dbReference type="CDD" id="cd07557">
    <property type="entry name" value="trimeric_dUTPase"/>
    <property type="match status" value="1"/>
</dbReference>
<dbReference type="Gene3D" id="2.70.40.10">
    <property type="match status" value="1"/>
</dbReference>
<dbReference type="HAMAP" id="MF_00116">
    <property type="entry name" value="dUTPase_bact"/>
    <property type="match status" value="1"/>
</dbReference>
<dbReference type="InterPro" id="IPR008181">
    <property type="entry name" value="dUTPase"/>
</dbReference>
<dbReference type="InterPro" id="IPR029054">
    <property type="entry name" value="dUTPase-like"/>
</dbReference>
<dbReference type="InterPro" id="IPR036157">
    <property type="entry name" value="dUTPase-like_sf"/>
</dbReference>
<dbReference type="InterPro" id="IPR033704">
    <property type="entry name" value="dUTPase_trimeric"/>
</dbReference>
<dbReference type="NCBIfam" id="TIGR00576">
    <property type="entry name" value="dut"/>
    <property type="match status" value="1"/>
</dbReference>
<dbReference type="NCBIfam" id="NF001862">
    <property type="entry name" value="PRK00601.1"/>
    <property type="match status" value="1"/>
</dbReference>
<dbReference type="PANTHER" id="PTHR11241">
    <property type="entry name" value="DEOXYURIDINE 5'-TRIPHOSPHATE NUCLEOTIDOHYDROLASE"/>
    <property type="match status" value="1"/>
</dbReference>
<dbReference type="PANTHER" id="PTHR11241:SF0">
    <property type="entry name" value="DEOXYURIDINE 5'-TRIPHOSPHATE NUCLEOTIDOHYDROLASE"/>
    <property type="match status" value="1"/>
</dbReference>
<dbReference type="Pfam" id="PF00692">
    <property type="entry name" value="dUTPase"/>
    <property type="match status" value="1"/>
</dbReference>
<dbReference type="SUPFAM" id="SSF51283">
    <property type="entry name" value="dUTPase-like"/>
    <property type="match status" value="1"/>
</dbReference>
<sequence length="177" mass="18854">MSLQDAHNSSSPSQKLPLWVQCLEHGQGLGLPHYATEGSAGLDLRAALPENESITLSPGQRALIPTGLIFHLSPGFEAQIRPRSGLALKNGITCLNTPGTIDSDYRGEVKVLLINLGQEDFIIERGMRIAQTVIAPVTQVEVRLLDPNSDLTSSQTDLSNQPNTGRGTGGFGSTGQK</sequence>